<accession>Q8TXD7</accession>
<sequence>MKRETFRYRGDMDLDGFLREMERVGALGAGRLGRAARILEKMWSSDDVTVLLTVAGPAVAGGLGELFERLIREGLVDAVITSGANVVHDALDALGGIHVCLGERNVDGYGRVHDTHIPTEAFEKFEHFMREVLSDLSGRVSCRELLWEMGKRLESGFLRAAADEGVPIYSPGILDSMVGLHVWIHSQDHDFHLDLVDDMHHLADLVFEAEELGAIILGGSVPKHFAMGAAMLRGGLDYAVQITMDRPETGSLSGAPLEEGKSWEKVREDAEVATIVGDYLIIFPLLASGVMQRLGIV</sequence>
<feature type="chain" id="PRO_0000134496" description="Probable deoxyhypusine synthase">
    <location>
        <begin position="1"/>
        <end position="297"/>
    </location>
</feature>
<feature type="active site" description="Nucleophile" evidence="1">
    <location>
        <position position="265"/>
    </location>
</feature>
<evidence type="ECO:0000255" key="1">
    <source>
        <dbReference type="HAMAP-Rule" id="MF_00153"/>
    </source>
</evidence>
<keyword id="KW-0386">Hypusine biosynthesis</keyword>
<keyword id="KW-0520">NAD</keyword>
<keyword id="KW-1185">Reference proteome</keyword>
<keyword id="KW-0808">Transferase</keyword>
<gene>
    <name evidence="1" type="primary">dys</name>
    <name type="ordered locus">MK0737</name>
</gene>
<comment type="function">
    <text evidence="1">Catalyzes the NAD-dependent oxidative cleavage of spermidine and the subsequent transfer of the butylamine moiety of spermidine to the epsilon-amino group of a specific lysine residue of the eIF-5A precursor protein to form the intermediate deoxyhypusine residue.</text>
</comment>
<comment type="catalytic activity">
    <reaction evidence="1">
        <text>[eIF5A protein]-L-lysine + spermidine = [eIF5A protein]-deoxyhypusine + propane-1,3-diamine</text>
        <dbReference type="Rhea" id="RHEA:33299"/>
        <dbReference type="Rhea" id="RHEA-COMP:10143"/>
        <dbReference type="Rhea" id="RHEA-COMP:10144"/>
        <dbReference type="ChEBI" id="CHEBI:29969"/>
        <dbReference type="ChEBI" id="CHEBI:57484"/>
        <dbReference type="ChEBI" id="CHEBI:57834"/>
        <dbReference type="ChEBI" id="CHEBI:82657"/>
        <dbReference type="EC" id="2.5.1.46"/>
    </reaction>
</comment>
<comment type="cofactor">
    <cofactor evidence="1">
        <name>NAD(+)</name>
        <dbReference type="ChEBI" id="CHEBI:57540"/>
    </cofactor>
</comment>
<comment type="pathway">
    <text evidence="1">Protein modification; eIF5A hypusination.</text>
</comment>
<comment type="similarity">
    <text evidence="1">Belongs to the deoxyhypusine synthase family.</text>
</comment>
<name>DHYS_METKA</name>
<dbReference type="EC" id="2.5.1.46" evidence="1"/>
<dbReference type="EMBL" id="AE009439">
    <property type="protein sequence ID" value="AAM01951.1"/>
    <property type="molecule type" value="Genomic_DNA"/>
</dbReference>
<dbReference type="RefSeq" id="WP_011019106.1">
    <property type="nucleotide sequence ID" value="NC_003551.1"/>
</dbReference>
<dbReference type="SMR" id="Q8TXD7"/>
<dbReference type="FunCoup" id="Q8TXD7">
    <property type="interactions" value="173"/>
</dbReference>
<dbReference type="STRING" id="190192.MK0737"/>
<dbReference type="PaxDb" id="190192-MK0737"/>
<dbReference type="EnsemblBacteria" id="AAM01951">
    <property type="protein sequence ID" value="AAM01951"/>
    <property type="gene ID" value="MK0737"/>
</dbReference>
<dbReference type="GeneID" id="1476838"/>
<dbReference type="KEGG" id="mka:MK0737"/>
<dbReference type="PATRIC" id="fig|190192.8.peg.777"/>
<dbReference type="HOGENOM" id="CLU_039781_1_0_2"/>
<dbReference type="InParanoid" id="Q8TXD7"/>
<dbReference type="OrthoDB" id="17730at2157"/>
<dbReference type="UniPathway" id="UPA00354"/>
<dbReference type="Proteomes" id="UP000001826">
    <property type="component" value="Chromosome"/>
</dbReference>
<dbReference type="GO" id="GO:0005737">
    <property type="term" value="C:cytoplasm"/>
    <property type="evidence" value="ECO:0007669"/>
    <property type="project" value="TreeGrafter"/>
</dbReference>
<dbReference type="GO" id="GO:0034038">
    <property type="term" value="F:deoxyhypusine synthase activity"/>
    <property type="evidence" value="ECO:0007669"/>
    <property type="project" value="UniProtKB-UniRule"/>
</dbReference>
<dbReference type="Gene3D" id="3.40.910.10">
    <property type="entry name" value="Deoxyhypusine synthase"/>
    <property type="match status" value="1"/>
</dbReference>
<dbReference type="HAMAP" id="MF_00153">
    <property type="entry name" value="DHS"/>
    <property type="match status" value="1"/>
</dbReference>
<dbReference type="InterPro" id="IPR022899">
    <property type="entry name" value="Deoxyhypus_synthase_arc"/>
</dbReference>
<dbReference type="InterPro" id="IPR002773">
    <property type="entry name" value="Deoxyhypusine_synthase"/>
</dbReference>
<dbReference type="InterPro" id="IPR036982">
    <property type="entry name" value="Deoxyhypusine_synthase_sf"/>
</dbReference>
<dbReference type="InterPro" id="IPR029035">
    <property type="entry name" value="DHS-like_NAD/FAD-binding_dom"/>
</dbReference>
<dbReference type="PANTHER" id="PTHR11703">
    <property type="entry name" value="DEOXYHYPUSINE SYNTHASE"/>
    <property type="match status" value="1"/>
</dbReference>
<dbReference type="PANTHER" id="PTHR11703:SF2">
    <property type="entry name" value="DEOXYHYPUSINE SYNTHASE-LIKE PROTEIN"/>
    <property type="match status" value="1"/>
</dbReference>
<dbReference type="Pfam" id="PF01916">
    <property type="entry name" value="DS"/>
    <property type="match status" value="1"/>
</dbReference>
<dbReference type="SUPFAM" id="SSF52467">
    <property type="entry name" value="DHS-like NAD/FAD-binding domain"/>
    <property type="match status" value="1"/>
</dbReference>
<organism>
    <name type="scientific">Methanopyrus kandleri (strain AV19 / DSM 6324 / JCM 9639 / NBRC 100938)</name>
    <dbReference type="NCBI Taxonomy" id="190192"/>
    <lineage>
        <taxon>Archaea</taxon>
        <taxon>Methanobacteriati</taxon>
        <taxon>Methanobacteriota</taxon>
        <taxon>Methanomada group</taxon>
        <taxon>Methanopyri</taxon>
        <taxon>Methanopyrales</taxon>
        <taxon>Methanopyraceae</taxon>
        <taxon>Methanopyrus</taxon>
    </lineage>
</organism>
<protein>
    <recommendedName>
        <fullName evidence="1">Probable deoxyhypusine synthase</fullName>
        <shortName evidence="1">DHS</shortName>
        <ecNumber evidence="1">2.5.1.46</ecNumber>
    </recommendedName>
</protein>
<proteinExistence type="inferred from homology"/>
<reference key="1">
    <citation type="journal article" date="2002" name="Proc. Natl. Acad. Sci. U.S.A.">
        <title>The complete genome of hyperthermophile Methanopyrus kandleri AV19 and monophyly of archaeal methanogens.</title>
        <authorList>
            <person name="Slesarev A.I."/>
            <person name="Mezhevaya K.V."/>
            <person name="Makarova K.S."/>
            <person name="Polushin N.N."/>
            <person name="Shcherbinina O.V."/>
            <person name="Shakhova V.V."/>
            <person name="Belova G.I."/>
            <person name="Aravind L."/>
            <person name="Natale D.A."/>
            <person name="Rogozin I.B."/>
            <person name="Tatusov R.L."/>
            <person name="Wolf Y.I."/>
            <person name="Stetter K.O."/>
            <person name="Malykh A.G."/>
            <person name="Koonin E.V."/>
            <person name="Kozyavkin S.A."/>
        </authorList>
    </citation>
    <scope>NUCLEOTIDE SEQUENCE [LARGE SCALE GENOMIC DNA]</scope>
    <source>
        <strain>AV19 / DSM 6324 / JCM 9639 / NBRC 100938</strain>
    </source>
</reference>